<keyword id="KW-0002">3D-structure</keyword>
<keyword id="KW-0164">Citrullination</keyword>
<keyword id="KW-0963">Cytoplasm</keyword>
<keyword id="KW-0903">Direct protein sequencing</keyword>
<keyword id="KW-1017">Isopeptide bond</keyword>
<keyword id="KW-0597">Phosphoprotein</keyword>
<keyword id="KW-1185">Reference proteome</keyword>
<keyword id="KW-0687">Ribonucleoprotein</keyword>
<keyword id="KW-0689">Ribosomal protein</keyword>
<keyword id="KW-0832">Ubl conjugation</keyword>
<gene>
    <name type="primary">Rpl19</name>
</gene>
<accession>P84099</accession>
<accession>P14118</accession>
<accession>P22908</accession>
<comment type="function">
    <text evidence="4">Component of the large ribosomal subunit (PubMed:36517592). The ribosome is a large ribonucleoprotein complex responsible for the synthesis of proteins in the cell (PubMed:36517592).</text>
</comment>
<comment type="subunit">
    <text evidence="4">Component of the large ribosomal subunit.</text>
</comment>
<comment type="subcellular location">
    <subcellularLocation>
        <location evidence="4">Cytoplasm</location>
    </subcellularLocation>
</comment>
<comment type="PTM">
    <text evidence="3">Citrullinated by PADI4.</text>
</comment>
<comment type="similarity">
    <text evidence="5">Belongs to the eukaryotic ribosomal protein eL19 family.</text>
</comment>
<name>RL19_MOUSE</name>
<sequence>MSMLRLQKRLASSVLRCGKKKVWLDPNETNEIANANSRQQIRKLIKDGLIIRKPVTVHSRARCRKNTLARRKGRHMGIGKRKGTANARMPEKVTWMRRMRILRRLLRRYRESKKIDRHMYHSLYLKVKGNVFKNKRILMEHIHKLKADKARKKLLADQAEARRSKTKEARKRREERLQAKKEEIIKTLSKEEETKK</sequence>
<protein>
    <recommendedName>
        <fullName evidence="5">Large ribosomal subunit protein eL19</fullName>
    </recommendedName>
    <alternativeName>
        <fullName>60S ribosomal protein L19</fullName>
    </alternativeName>
</protein>
<reference key="1">
    <citation type="journal article" date="1990" name="DNA Cell Biol.">
        <title>Nucleotide sequence of mouse L19 ribosomal protein cDNA isolated in screening with tre oncogene probes.</title>
        <authorList>
            <person name="Nakamura T."/>
            <person name="Onno M."/>
            <person name="Mariage-Samson R."/>
            <person name="Hillova J."/>
            <person name="Hill M."/>
        </authorList>
    </citation>
    <scope>NUCLEOTIDE SEQUENCE [MRNA]</scope>
</reference>
<reference key="2">
    <citation type="journal article" date="2005" name="Science">
        <title>The transcriptional landscape of the mammalian genome.</title>
        <authorList>
            <person name="Carninci P."/>
            <person name="Kasukawa T."/>
            <person name="Katayama S."/>
            <person name="Gough J."/>
            <person name="Frith M.C."/>
            <person name="Maeda N."/>
            <person name="Oyama R."/>
            <person name="Ravasi T."/>
            <person name="Lenhard B."/>
            <person name="Wells C."/>
            <person name="Kodzius R."/>
            <person name="Shimokawa K."/>
            <person name="Bajic V.B."/>
            <person name="Brenner S.E."/>
            <person name="Batalov S."/>
            <person name="Forrest A.R."/>
            <person name="Zavolan M."/>
            <person name="Davis M.J."/>
            <person name="Wilming L.G."/>
            <person name="Aidinis V."/>
            <person name="Allen J.E."/>
            <person name="Ambesi-Impiombato A."/>
            <person name="Apweiler R."/>
            <person name="Aturaliya R.N."/>
            <person name="Bailey T.L."/>
            <person name="Bansal M."/>
            <person name="Baxter L."/>
            <person name="Beisel K.W."/>
            <person name="Bersano T."/>
            <person name="Bono H."/>
            <person name="Chalk A.M."/>
            <person name="Chiu K.P."/>
            <person name="Choudhary V."/>
            <person name="Christoffels A."/>
            <person name="Clutterbuck D.R."/>
            <person name="Crowe M.L."/>
            <person name="Dalla E."/>
            <person name="Dalrymple B.P."/>
            <person name="de Bono B."/>
            <person name="Della Gatta G."/>
            <person name="di Bernardo D."/>
            <person name="Down T."/>
            <person name="Engstrom P."/>
            <person name="Fagiolini M."/>
            <person name="Faulkner G."/>
            <person name="Fletcher C.F."/>
            <person name="Fukushima T."/>
            <person name="Furuno M."/>
            <person name="Futaki S."/>
            <person name="Gariboldi M."/>
            <person name="Georgii-Hemming P."/>
            <person name="Gingeras T.R."/>
            <person name="Gojobori T."/>
            <person name="Green R.E."/>
            <person name="Gustincich S."/>
            <person name="Harbers M."/>
            <person name="Hayashi Y."/>
            <person name="Hensch T.K."/>
            <person name="Hirokawa N."/>
            <person name="Hill D."/>
            <person name="Huminiecki L."/>
            <person name="Iacono M."/>
            <person name="Ikeo K."/>
            <person name="Iwama A."/>
            <person name="Ishikawa T."/>
            <person name="Jakt M."/>
            <person name="Kanapin A."/>
            <person name="Katoh M."/>
            <person name="Kawasawa Y."/>
            <person name="Kelso J."/>
            <person name="Kitamura H."/>
            <person name="Kitano H."/>
            <person name="Kollias G."/>
            <person name="Krishnan S.P."/>
            <person name="Kruger A."/>
            <person name="Kummerfeld S.K."/>
            <person name="Kurochkin I.V."/>
            <person name="Lareau L.F."/>
            <person name="Lazarevic D."/>
            <person name="Lipovich L."/>
            <person name="Liu J."/>
            <person name="Liuni S."/>
            <person name="McWilliam S."/>
            <person name="Madan Babu M."/>
            <person name="Madera M."/>
            <person name="Marchionni L."/>
            <person name="Matsuda H."/>
            <person name="Matsuzawa S."/>
            <person name="Miki H."/>
            <person name="Mignone F."/>
            <person name="Miyake S."/>
            <person name="Morris K."/>
            <person name="Mottagui-Tabar S."/>
            <person name="Mulder N."/>
            <person name="Nakano N."/>
            <person name="Nakauchi H."/>
            <person name="Ng P."/>
            <person name="Nilsson R."/>
            <person name="Nishiguchi S."/>
            <person name="Nishikawa S."/>
            <person name="Nori F."/>
            <person name="Ohara O."/>
            <person name="Okazaki Y."/>
            <person name="Orlando V."/>
            <person name="Pang K.C."/>
            <person name="Pavan W.J."/>
            <person name="Pavesi G."/>
            <person name="Pesole G."/>
            <person name="Petrovsky N."/>
            <person name="Piazza S."/>
            <person name="Reed J."/>
            <person name="Reid J.F."/>
            <person name="Ring B.Z."/>
            <person name="Ringwald M."/>
            <person name="Rost B."/>
            <person name="Ruan Y."/>
            <person name="Salzberg S.L."/>
            <person name="Sandelin A."/>
            <person name="Schneider C."/>
            <person name="Schoenbach C."/>
            <person name="Sekiguchi K."/>
            <person name="Semple C.A."/>
            <person name="Seno S."/>
            <person name="Sessa L."/>
            <person name="Sheng Y."/>
            <person name="Shibata Y."/>
            <person name="Shimada H."/>
            <person name="Shimada K."/>
            <person name="Silva D."/>
            <person name="Sinclair B."/>
            <person name="Sperling S."/>
            <person name="Stupka E."/>
            <person name="Sugiura K."/>
            <person name="Sultana R."/>
            <person name="Takenaka Y."/>
            <person name="Taki K."/>
            <person name="Tammoja K."/>
            <person name="Tan S.L."/>
            <person name="Tang S."/>
            <person name="Taylor M.S."/>
            <person name="Tegner J."/>
            <person name="Teichmann S.A."/>
            <person name="Ueda H.R."/>
            <person name="van Nimwegen E."/>
            <person name="Verardo R."/>
            <person name="Wei C.L."/>
            <person name="Yagi K."/>
            <person name="Yamanishi H."/>
            <person name="Zabarovsky E."/>
            <person name="Zhu S."/>
            <person name="Zimmer A."/>
            <person name="Hide W."/>
            <person name="Bult C."/>
            <person name="Grimmond S.M."/>
            <person name="Teasdale R.D."/>
            <person name="Liu E.T."/>
            <person name="Brusic V."/>
            <person name="Quackenbush J."/>
            <person name="Wahlestedt C."/>
            <person name="Mattick J.S."/>
            <person name="Hume D.A."/>
            <person name="Kai C."/>
            <person name="Sasaki D."/>
            <person name="Tomaru Y."/>
            <person name="Fukuda S."/>
            <person name="Kanamori-Katayama M."/>
            <person name="Suzuki M."/>
            <person name="Aoki J."/>
            <person name="Arakawa T."/>
            <person name="Iida J."/>
            <person name="Imamura K."/>
            <person name="Itoh M."/>
            <person name="Kato T."/>
            <person name="Kawaji H."/>
            <person name="Kawagashira N."/>
            <person name="Kawashima T."/>
            <person name="Kojima M."/>
            <person name="Kondo S."/>
            <person name="Konno H."/>
            <person name="Nakano K."/>
            <person name="Ninomiya N."/>
            <person name="Nishio T."/>
            <person name="Okada M."/>
            <person name="Plessy C."/>
            <person name="Shibata K."/>
            <person name="Shiraki T."/>
            <person name="Suzuki S."/>
            <person name="Tagami M."/>
            <person name="Waki K."/>
            <person name="Watahiki A."/>
            <person name="Okamura-Oho Y."/>
            <person name="Suzuki H."/>
            <person name="Kawai J."/>
            <person name="Hayashizaki Y."/>
        </authorList>
    </citation>
    <scope>NUCLEOTIDE SEQUENCE [LARGE SCALE MRNA]</scope>
    <source>
        <strain>C57BL/6J</strain>
    </source>
</reference>
<reference key="3">
    <citation type="journal article" date="2004" name="Genome Res.">
        <title>The status, quality, and expansion of the NIH full-length cDNA project: the Mammalian Gene Collection (MGC).</title>
        <authorList>
            <consortium name="The MGC Project Team"/>
        </authorList>
    </citation>
    <scope>NUCLEOTIDE SEQUENCE [LARGE SCALE MRNA]</scope>
</reference>
<reference key="4">
    <citation type="submission" date="2009-01" db="UniProtKB">
        <authorList>
            <person name="Lubec G."/>
            <person name="Sunyer B."/>
            <person name="Chen W.-Q."/>
        </authorList>
    </citation>
    <scope>PROTEIN SEQUENCE OF 187-195</scope>
    <scope>IDENTIFICATION BY MASS SPECTROMETRY</scope>
    <source>
        <strain>OF1</strain>
        <tissue>Hippocampus</tissue>
    </source>
</reference>
<reference key="5">
    <citation type="journal article" date="2010" name="Cell">
        <title>A tissue-specific atlas of mouse protein phosphorylation and expression.</title>
        <authorList>
            <person name="Huttlin E.L."/>
            <person name="Jedrychowski M.P."/>
            <person name="Elias J.E."/>
            <person name="Goswami T."/>
            <person name="Rad R."/>
            <person name="Beausoleil S.A."/>
            <person name="Villen J."/>
            <person name="Haas W."/>
            <person name="Sowa M.E."/>
            <person name="Gygi S.P."/>
        </authorList>
    </citation>
    <scope>IDENTIFICATION BY MASS SPECTROMETRY [LARGE SCALE ANALYSIS]</scope>
    <source>
        <tissue>Brain</tissue>
        <tissue>Brown adipose tissue</tissue>
        <tissue>Heart</tissue>
        <tissue>Kidney</tissue>
        <tissue>Liver</tissue>
        <tissue>Lung</tissue>
        <tissue>Pancreas</tissue>
        <tissue>Spleen</tissue>
        <tissue>Testis</tissue>
    </source>
</reference>
<reference key="6">
    <citation type="journal article" date="2014" name="Nature">
        <title>Citrullination regulates pluripotency and histone H1 binding to chromatin.</title>
        <authorList>
            <person name="Christophorou M.A."/>
            <person name="Castelo-Branco G."/>
            <person name="Halley-Stott R.P."/>
            <person name="Oliveira C.S."/>
            <person name="Loos R."/>
            <person name="Radzisheuskaya A."/>
            <person name="Mowen K.A."/>
            <person name="Bertone P."/>
            <person name="Silva J.C."/>
            <person name="Zernicka-Goetz M."/>
            <person name="Nielsen M.L."/>
            <person name="Gurdon J.B."/>
            <person name="Kouzarides T."/>
        </authorList>
    </citation>
    <scope>CITRULLINATION AT ARG-5; ARG-16 AND ARG-38</scope>
</reference>
<reference key="7">
    <citation type="journal article" date="2001" name="Structure">
        <title>Promiscuous antigen presentation by the nonclassical MHC Ib Qa-2 is enabled by a shallow, hydrophobic groove and self-stabilized peptide conformation.</title>
        <authorList>
            <person name="He X."/>
            <person name="Tabaczewski P."/>
            <person name="Ho J."/>
            <person name="Stroynowski I."/>
            <person name="Garcia K.C."/>
        </authorList>
    </citation>
    <scope>X-RAY CRYSTALLOGRAPHY (2.3 ANGSTROMS) OF 137-145 IN COMPLEX WITH MHC</scope>
</reference>
<reference evidence="6 7" key="8">
    <citation type="journal article" date="2022" name="Nature">
        <title>A male germ-cell-specific ribosome controls male fertility.</title>
        <authorList>
            <person name="Li H."/>
            <person name="Huo Y."/>
            <person name="He X."/>
            <person name="Yao L."/>
            <person name="Zhang H."/>
            <person name="Cui Y."/>
            <person name="Xiao H."/>
            <person name="Xie W."/>
            <person name="Zhang D."/>
            <person name="Wang Y."/>
            <person name="Zhang S."/>
            <person name="Tu H."/>
            <person name="Cheng Y."/>
            <person name="Guo Y."/>
            <person name="Cao X."/>
            <person name="Zhu Y."/>
            <person name="Jiang T."/>
            <person name="Guo X."/>
            <person name="Qin Y."/>
            <person name="Sha J."/>
        </authorList>
    </citation>
    <scope>STRUCTURE BY ELECTRON MICROSCOPY (3.03 ANGSTROMS) OF RIBOSOME</scope>
    <scope>FUNCTION</scope>
    <scope>SUBUNIT</scope>
    <scope>SUBCELLULAR LOCATION</scope>
</reference>
<organism>
    <name type="scientific">Mus musculus</name>
    <name type="common">Mouse</name>
    <dbReference type="NCBI Taxonomy" id="10090"/>
    <lineage>
        <taxon>Eukaryota</taxon>
        <taxon>Metazoa</taxon>
        <taxon>Chordata</taxon>
        <taxon>Craniata</taxon>
        <taxon>Vertebrata</taxon>
        <taxon>Euteleostomi</taxon>
        <taxon>Mammalia</taxon>
        <taxon>Eutheria</taxon>
        <taxon>Euarchontoglires</taxon>
        <taxon>Glires</taxon>
        <taxon>Rodentia</taxon>
        <taxon>Myomorpha</taxon>
        <taxon>Muroidea</taxon>
        <taxon>Muridae</taxon>
        <taxon>Murinae</taxon>
        <taxon>Mus</taxon>
        <taxon>Mus</taxon>
    </lineage>
</organism>
<evidence type="ECO:0000250" key="1">
    <source>
        <dbReference type="UniProtKB" id="P84098"/>
    </source>
</evidence>
<evidence type="ECO:0000256" key="2">
    <source>
        <dbReference type="SAM" id="MobiDB-lite"/>
    </source>
</evidence>
<evidence type="ECO:0000269" key="3">
    <source>
    </source>
</evidence>
<evidence type="ECO:0000269" key="4">
    <source>
    </source>
</evidence>
<evidence type="ECO:0000305" key="5"/>
<evidence type="ECO:0007744" key="6">
    <source>
        <dbReference type="PDB" id="7CPU"/>
    </source>
</evidence>
<evidence type="ECO:0007744" key="7">
    <source>
        <dbReference type="PDB" id="7CPV"/>
    </source>
</evidence>
<feature type="chain" id="PRO_0000131171" description="Large ribosomal subunit protein eL19">
    <location>
        <begin position="1"/>
        <end position="196"/>
    </location>
</feature>
<feature type="region of interest" description="Disordered" evidence="2">
    <location>
        <begin position="157"/>
        <end position="176"/>
    </location>
</feature>
<feature type="compositionally biased region" description="Basic and acidic residues" evidence="2">
    <location>
        <begin position="159"/>
        <end position="176"/>
    </location>
</feature>
<feature type="modified residue" description="Citrulline" evidence="3">
    <location>
        <position position="5"/>
    </location>
</feature>
<feature type="modified residue" description="Phosphoserine" evidence="1">
    <location>
        <position position="13"/>
    </location>
</feature>
<feature type="modified residue" description="Citrulline" evidence="3">
    <location>
        <position position="16"/>
    </location>
</feature>
<feature type="modified residue" description="Citrulline" evidence="3">
    <location>
        <position position="38"/>
    </location>
</feature>
<feature type="modified residue" description="Phosphoserine" evidence="1">
    <location>
        <position position="164"/>
    </location>
</feature>
<feature type="modified residue" description="Phosphothreonine" evidence="1">
    <location>
        <position position="187"/>
    </location>
</feature>
<feature type="cross-link" description="Glycyl lysine isopeptide (Lys-Gly) (interchain with G-Cter in SUMO1)" evidence="1">
    <location>
        <position position="181"/>
    </location>
</feature>
<feature type="sequence conflict" description="In Ref. 1; AAB48630." evidence="5" ref="1">
    <original>A</original>
    <variation>S</variation>
    <location>
        <position position="179"/>
    </location>
</feature>
<proteinExistence type="evidence at protein level"/>
<dbReference type="EMBL" id="M62952">
    <property type="protein sequence ID" value="AAB48630.1"/>
    <property type="molecule type" value="mRNA"/>
</dbReference>
<dbReference type="EMBL" id="AK010440">
    <property type="protein sequence ID" value="BAB26941.1"/>
    <property type="molecule type" value="mRNA"/>
</dbReference>
<dbReference type="EMBL" id="BC010710">
    <property type="protein sequence ID" value="AAH10710.1"/>
    <property type="molecule type" value="mRNA"/>
</dbReference>
<dbReference type="EMBL" id="BC083131">
    <property type="protein sequence ID" value="AAH83131.1"/>
    <property type="molecule type" value="mRNA"/>
</dbReference>
<dbReference type="CCDS" id="CCDS25337.1"/>
<dbReference type="PIR" id="A36554">
    <property type="entry name" value="A36554"/>
</dbReference>
<dbReference type="RefSeq" id="NP_033104.2">
    <property type="nucleotide sequence ID" value="NM_009078.2"/>
</dbReference>
<dbReference type="RefSeq" id="XP_036012353.1">
    <property type="nucleotide sequence ID" value="XM_036156460.1"/>
</dbReference>
<dbReference type="RefSeq" id="XP_036012354.1">
    <property type="nucleotide sequence ID" value="XM_036156461.1"/>
</dbReference>
<dbReference type="PDB" id="1K8D">
    <property type="method" value="X-ray"/>
    <property type="resolution" value="2.30 A"/>
    <property type="chains" value="P=137-145"/>
</dbReference>
<dbReference type="PDB" id="6SWA">
    <property type="method" value="EM"/>
    <property type="resolution" value="3.10 A"/>
    <property type="chains" value="o=1-196"/>
</dbReference>
<dbReference type="PDB" id="7CPU">
    <property type="method" value="EM"/>
    <property type="resolution" value="2.82 A"/>
    <property type="chains" value="LR=1-196"/>
</dbReference>
<dbReference type="PDB" id="7CPV">
    <property type="method" value="EM"/>
    <property type="resolution" value="3.03 A"/>
    <property type="chains" value="LR=1-196"/>
</dbReference>
<dbReference type="PDB" id="7LS1">
    <property type="method" value="EM"/>
    <property type="resolution" value="3.30 A"/>
    <property type="chains" value="L2=1-196"/>
</dbReference>
<dbReference type="PDB" id="7LS2">
    <property type="method" value="EM"/>
    <property type="resolution" value="3.10 A"/>
    <property type="chains" value="L2=1-196"/>
</dbReference>
<dbReference type="PDBsum" id="1K8D"/>
<dbReference type="PDBsum" id="6SWA"/>
<dbReference type="PDBsum" id="7CPU"/>
<dbReference type="PDBsum" id="7CPV"/>
<dbReference type="PDBsum" id="7LS1"/>
<dbReference type="PDBsum" id="7LS2"/>
<dbReference type="EMDB" id="EMD-10321"/>
<dbReference type="EMDB" id="EMD-23500"/>
<dbReference type="EMDB" id="EMD-23501"/>
<dbReference type="EMDB" id="EMD-30432"/>
<dbReference type="EMDB" id="EMD-30433"/>
<dbReference type="SMR" id="P84099"/>
<dbReference type="BioGRID" id="202969">
    <property type="interactions" value="88"/>
</dbReference>
<dbReference type="ComplexPortal" id="CPX-5262">
    <property type="entry name" value="60S cytosolic large ribosomal subunit"/>
</dbReference>
<dbReference type="ComplexPortal" id="CPX-7662">
    <property type="entry name" value="60S cytosolic large ribosomal subunit, testis-specific variant"/>
</dbReference>
<dbReference type="ComplexPortal" id="CPX-7663">
    <property type="entry name" value="60S cytosolic large ribosomal subunit, striated muscle variant"/>
</dbReference>
<dbReference type="CORUM" id="P84099"/>
<dbReference type="FunCoup" id="P84099">
    <property type="interactions" value="2781"/>
</dbReference>
<dbReference type="IntAct" id="P84099">
    <property type="interactions" value="4"/>
</dbReference>
<dbReference type="STRING" id="10090.ENSMUSP00000017548"/>
<dbReference type="GlyGen" id="P84099">
    <property type="glycosylation" value="2 sites, 1 N-linked glycan (1 site), 1 O-linked glycan (1 site)"/>
</dbReference>
<dbReference type="iPTMnet" id="P84099"/>
<dbReference type="PhosphoSitePlus" id="P84099"/>
<dbReference type="SwissPalm" id="P84099"/>
<dbReference type="jPOST" id="P84099"/>
<dbReference type="PaxDb" id="10090-ENSMUSP00000017548"/>
<dbReference type="ProteomicsDB" id="253248"/>
<dbReference type="Pumba" id="P84099"/>
<dbReference type="TopDownProteomics" id="P84099"/>
<dbReference type="Antibodypedia" id="28221">
    <property type="antibodies" value="197 antibodies from 32 providers"/>
</dbReference>
<dbReference type="DNASU" id="19921"/>
<dbReference type="Ensembl" id="ENSMUST00000017548.7">
    <property type="protein sequence ID" value="ENSMUSP00000017548.7"/>
    <property type="gene ID" value="ENSMUSG00000017404.13"/>
</dbReference>
<dbReference type="GeneID" id="19921"/>
<dbReference type="KEGG" id="mmu:19921"/>
<dbReference type="UCSC" id="uc007lfj.2">
    <property type="organism name" value="mouse"/>
</dbReference>
<dbReference type="AGR" id="MGI:98020"/>
<dbReference type="CTD" id="6143"/>
<dbReference type="MGI" id="MGI:98020">
    <property type="gene designation" value="Rpl19"/>
</dbReference>
<dbReference type="VEuPathDB" id="HostDB:ENSMUSG00000017404"/>
<dbReference type="eggNOG" id="KOG1696">
    <property type="taxonomic scope" value="Eukaryota"/>
</dbReference>
<dbReference type="GeneTree" id="ENSGT00390000012628"/>
<dbReference type="InParanoid" id="P84099"/>
<dbReference type="OMA" id="NRVWIDP"/>
<dbReference type="OrthoDB" id="5407653at2759"/>
<dbReference type="PhylomeDB" id="P84099"/>
<dbReference type="TreeFam" id="TF313598"/>
<dbReference type="Reactome" id="R-MMU-156827">
    <property type="pathway name" value="L13a-mediated translational silencing of Ceruloplasmin expression"/>
</dbReference>
<dbReference type="Reactome" id="R-MMU-1799339">
    <property type="pathway name" value="SRP-dependent cotranslational protein targeting to membrane"/>
</dbReference>
<dbReference type="Reactome" id="R-MMU-6791226">
    <property type="pathway name" value="Major pathway of rRNA processing in the nucleolus and cytosol"/>
</dbReference>
<dbReference type="Reactome" id="R-MMU-72689">
    <property type="pathway name" value="Formation of a pool of free 40S subunits"/>
</dbReference>
<dbReference type="Reactome" id="R-MMU-72706">
    <property type="pathway name" value="GTP hydrolysis and joining of the 60S ribosomal subunit"/>
</dbReference>
<dbReference type="Reactome" id="R-MMU-975956">
    <property type="pathway name" value="Nonsense Mediated Decay (NMD) independent of the Exon Junction Complex (EJC)"/>
</dbReference>
<dbReference type="Reactome" id="R-MMU-975957">
    <property type="pathway name" value="Nonsense Mediated Decay (NMD) enhanced by the Exon Junction Complex (EJC)"/>
</dbReference>
<dbReference type="BioGRID-ORCS" id="19921">
    <property type="hits" value="27 hits in 75 CRISPR screens"/>
</dbReference>
<dbReference type="CD-CODE" id="CE726F99">
    <property type="entry name" value="Postsynaptic density"/>
</dbReference>
<dbReference type="ChiTaRS" id="Rpl19">
    <property type="organism name" value="mouse"/>
</dbReference>
<dbReference type="EvolutionaryTrace" id="P84099"/>
<dbReference type="PRO" id="PR:P84099"/>
<dbReference type="Proteomes" id="UP000000589">
    <property type="component" value="Chromosome 11"/>
</dbReference>
<dbReference type="RNAct" id="P84099">
    <property type="molecule type" value="protein"/>
</dbReference>
<dbReference type="Bgee" id="ENSMUSG00000017404">
    <property type="expression patterns" value="Expressed in ectoplacental cone and 65 other cell types or tissues"/>
</dbReference>
<dbReference type="ExpressionAtlas" id="P84099">
    <property type="expression patterns" value="baseline and differential"/>
</dbReference>
<dbReference type="GO" id="GO:0005737">
    <property type="term" value="C:cytoplasm"/>
    <property type="evidence" value="ECO:0000314"/>
    <property type="project" value="ComplexPortal"/>
</dbReference>
<dbReference type="GO" id="GO:0005829">
    <property type="term" value="C:cytosol"/>
    <property type="evidence" value="ECO:0000304"/>
    <property type="project" value="Reactome"/>
</dbReference>
<dbReference type="GO" id="GO:0022625">
    <property type="term" value="C:cytosolic large ribosomal subunit"/>
    <property type="evidence" value="ECO:0000314"/>
    <property type="project" value="UniProtKB"/>
</dbReference>
<dbReference type="GO" id="GO:0005730">
    <property type="term" value="C:nucleolus"/>
    <property type="evidence" value="ECO:0007669"/>
    <property type="project" value="Ensembl"/>
</dbReference>
<dbReference type="GO" id="GO:0045202">
    <property type="term" value="C:synapse"/>
    <property type="evidence" value="ECO:0000314"/>
    <property type="project" value="SynGO"/>
</dbReference>
<dbReference type="GO" id="GO:0003723">
    <property type="term" value="F:RNA binding"/>
    <property type="evidence" value="ECO:0007669"/>
    <property type="project" value="InterPro"/>
</dbReference>
<dbReference type="GO" id="GO:0003735">
    <property type="term" value="F:structural constituent of ribosome"/>
    <property type="evidence" value="ECO:0000314"/>
    <property type="project" value="UniProtKB"/>
</dbReference>
<dbReference type="GO" id="GO:0002181">
    <property type="term" value="P:cytoplasmic translation"/>
    <property type="evidence" value="ECO:0000303"/>
    <property type="project" value="ComplexPortal"/>
</dbReference>
<dbReference type="GO" id="GO:0006412">
    <property type="term" value="P:translation"/>
    <property type="evidence" value="ECO:0000305"/>
    <property type="project" value="MGI"/>
</dbReference>
<dbReference type="CDD" id="cd01417">
    <property type="entry name" value="Ribosomal_L19e_E"/>
    <property type="match status" value="1"/>
</dbReference>
<dbReference type="FunFam" id="1.10.1200.240:FF:000001">
    <property type="entry name" value="Ribosomal protein L19"/>
    <property type="match status" value="1"/>
</dbReference>
<dbReference type="FunFam" id="1.10.1650.10:FF:000001">
    <property type="entry name" value="Ribosomal protein L19"/>
    <property type="match status" value="1"/>
</dbReference>
<dbReference type="Gene3D" id="1.10.1200.240">
    <property type="match status" value="1"/>
</dbReference>
<dbReference type="Gene3D" id="1.10.1650.10">
    <property type="match status" value="1"/>
</dbReference>
<dbReference type="HAMAP" id="MF_01475">
    <property type="entry name" value="Ribosomal_eL19"/>
    <property type="match status" value="1"/>
</dbReference>
<dbReference type="InterPro" id="IPR035970">
    <property type="entry name" value="60S_ribosomal_eL19_sf"/>
</dbReference>
<dbReference type="InterPro" id="IPR039547">
    <property type="entry name" value="Ribosomal_eL19"/>
</dbReference>
<dbReference type="InterPro" id="IPR023638">
    <property type="entry name" value="Ribosomal_eL19_CS"/>
</dbReference>
<dbReference type="InterPro" id="IPR000196">
    <property type="entry name" value="Ribosomal_eL19_dom"/>
</dbReference>
<dbReference type="InterPro" id="IPR015972">
    <property type="entry name" value="Ribosomal_eL19_dom1"/>
</dbReference>
<dbReference type="InterPro" id="IPR033935">
    <property type="entry name" value="Ribosomal_eL19_euk"/>
</dbReference>
<dbReference type="NCBIfam" id="NF006343">
    <property type="entry name" value="PRK08570.1"/>
    <property type="match status" value="1"/>
</dbReference>
<dbReference type="PANTHER" id="PTHR10722">
    <property type="entry name" value="60S RIBOSOMAL PROTEIN L19"/>
    <property type="match status" value="1"/>
</dbReference>
<dbReference type="Pfam" id="PF01280">
    <property type="entry name" value="Ribosomal_L19e"/>
    <property type="match status" value="1"/>
</dbReference>
<dbReference type="Pfam" id="PF25476">
    <property type="entry name" value="Ribosomal_L19e_C"/>
    <property type="match status" value="1"/>
</dbReference>
<dbReference type="SMART" id="SM01416">
    <property type="entry name" value="Ribosomal_L19e"/>
    <property type="match status" value="1"/>
</dbReference>
<dbReference type="SUPFAM" id="SSF48140">
    <property type="entry name" value="Ribosomal protein L19 (L19e)"/>
    <property type="match status" value="1"/>
</dbReference>
<dbReference type="PROSITE" id="PS00526">
    <property type="entry name" value="RIBOSOMAL_L19E"/>
    <property type="match status" value="1"/>
</dbReference>